<keyword id="KW-1003">Cell membrane</keyword>
<keyword id="KW-0210">Decarboxylase</keyword>
<keyword id="KW-0444">Lipid biosynthesis</keyword>
<keyword id="KW-0443">Lipid metabolism</keyword>
<keyword id="KW-0456">Lyase</keyword>
<keyword id="KW-0472">Membrane</keyword>
<keyword id="KW-0594">Phospholipid biosynthesis</keyword>
<keyword id="KW-1208">Phospholipid metabolism</keyword>
<keyword id="KW-0670">Pyruvate</keyword>
<keyword id="KW-1185">Reference proteome</keyword>
<keyword id="KW-0865">Zymogen</keyword>
<proteinExistence type="inferred from homology"/>
<name>PSD_BURPS</name>
<organism>
    <name type="scientific">Burkholderia pseudomallei (strain K96243)</name>
    <dbReference type="NCBI Taxonomy" id="272560"/>
    <lineage>
        <taxon>Bacteria</taxon>
        <taxon>Pseudomonadati</taxon>
        <taxon>Pseudomonadota</taxon>
        <taxon>Betaproteobacteria</taxon>
        <taxon>Burkholderiales</taxon>
        <taxon>Burkholderiaceae</taxon>
        <taxon>Burkholderia</taxon>
        <taxon>pseudomallei group</taxon>
    </lineage>
</organism>
<sequence length="216" mass="23476">MNYPHPIIAREGWPFIAIAAVVALLIHAVGGFGLAWPFWLLLVFVVQFFRDPPRAIPTQANAVLCPADGRIVAVETAHDPYADREALKISVFMNVFNVHSQRSPVDGAVQKVEYFPGAFLNAALDKASAENERNAVVIQTGAGHTVTAVQIAGLVARRILCYVRAGEPLSRGQRYGFIRFGSRVDVYLPKGSRARVSIGEKVSASSTILAELPEQP</sequence>
<reference key="1">
    <citation type="journal article" date="2004" name="Proc. Natl. Acad. Sci. U.S.A.">
        <title>Genomic plasticity of the causative agent of melioidosis, Burkholderia pseudomallei.</title>
        <authorList>
            <person name="Holden M.T.G."/>
            <person name="Titball R.W."/>
            <person name="Peacock S.J."/>
            <person name="Cerdeno-Tarraga A.-M."/>
            <person name="Atkins T."/>
            <person name="Crossman L.C."/>
            <person name="Pitt T."/>
            <person name="Churcher C."/>
            <person name="Mungall K.L."/>
            <person name="Bentley S.D."/>
            <person name="Sebaihia M."/>
            <person name="Thomson N.R."/>
            <person name="Bason N."/>
            <person name="Beacham I.R."/>
            <person name="Brooks K."/>
            <person name="Brown K.A."/>
            <person name="Brown N.F."/>
            <person name="Challis G.L."/>
            <person name="Cherevach I."/>
            <person name="Chillingworth T."/>
            <person name="Cronin A."/>
            <person name="Crossett B."/>
            <person name="Davis P."/>
            <person name="DeShazer D."/>
            <person name="Feltwell T."/>
            <person name="Fraser A."/>
            <person name="Hance Z."/>
            <person name="Hauser H."/>
            <person name="Holroyd S."/>
            <person name="Jagels K."/>
            <person name="Keith K.E."/>
            <person name="Maddison M."/>
            <person name="Moule S."/>
            <person name="Price C."/>
            <person name="Quail M.A."/>
            <person name="Rabbinowitsch E."/>
            <person name="Rutherford K."/>
            <person name="Sanders M."/>
            <person name="Simmonds M."/>
            <person name="Songsivilai S."/>
            <person name="Stevens K."/>
            <person name="Tumapa S."/>
            <person name="Vesaratchavest M."/>
            <person name="Whitehead S."/>
            <person name="Yeats C."/>
            <person name="Barrell B.G."/>
            <person name="Oyston P.C.F."/>
            <person name="Parkhill J."/>
        </authorList>
    </citation>
    <scope>NUCLEOTIDE SEQUENCE [LARGE SCALE GENOMIC DNA]</scope>
    <source>
        <strain>K96243</strain>
    </source>
</reference>
<feature type="chain" id="PRO_0000029765" description="Phosphatidylserine decarboxylase beta chain" evidence="1">
    <location>
        <begin position="1"/>
        <end position="181"/>
    </location>
</feature>
<feature type="chain" id="PRO_0000029766" description="Phosphatidylserine decarboxylase alpha chain" evidence="1">
    <location>
        <begin position="182"/>
        <end position="216"/>
    </location>
</feature>
<feature type="active site" description="Schiff-base intermediate with substrate; via pyruvic acid" evidence="1">
    <location>
        <position position="182"/>
    </location>
</feature>
<feature type="site" description="Cleavage (non-hydrolytic); by autocatalysis" evidence="1">
    <location>
        <begin position="181"/>
        <end position="182"/>
    </location>
</feature>
<feature type="modified residue" description="Pyruvic acid (Ser); by autocatalysis" evidence="1">
    <location>
        <position position="182"/>
    </location>
</feature>
<dbReference type="EC" id="4.1.1.65" evidence="1"/>
<dbReference type="EMBL" id="BX571965">
    <property type="protein sequence ID" value="CAH35194.1"/>
    <property type="molecule type" value="Genomic_DNA"/>
</dbReference>
<dbReference type="RefSeq" id="WP_004531897.1">
    <property type="nucleotide sequence ID" value="NZ_CP009538.1"/>
</dbReference>
<dbReference type="RefSeq" id="YP_107821.1">
    <property type="nucleotide sequence ID" value="NC_006350.1"/>
</dbReference>
<dbReference type="STRING" id="272560.BPSL1199"/>
<dbReference type="KEGG" id="bps:BPSL1199"/>
<dbReference type="PATRIC" id="fig|272560.51.peg.328"/>
<dbReference type="eggNOG" id="COG0688">
    <property type="taxonomic scope" value="Bacteria"/>
</dbReference>
<dbReference type="UniPathway" id="UPA00558">
    <property type="reaction ID" value="UER00616"/>
</dbReference>
<dbReference type="Proteomes" id="UP000000605">
    <property type="component" value="Chromosome 1"/>
</dbReference>
<dbReference type="GO" id="GO:0005886">
    <property type="term" value="C:plasma membrane"/>
    <property type="evidence" value="ECO:0007669"/>
    <property type="project" value="UniProtKB-SubCell"/>
</dbReference>
<dbReference type="GO" id="GO:0004609">
    <property type="term" value="F:phosphatidylserine decarboxylase activity"/>
    <property type="evidence" value="ECO:0007669"/>
    <property type="project" value="UniProtKB-UniRule"/>
</dbReference>
<dbReference type="GO" id="GO:0006646">
    <property type="term" value="P:phosphatidylethanolamine biosynthetic process"/>
    <property type="evidence" value="ECO:0007669"/>
    <property type="project" value="UniProtKB-UniRule"/>
</dbReference>
<dbReference type="HAMAP" id="MF_00664">
    <property type="entry name" value="PS_decarb_PSD_A"/>
    <property type="match status" value="1"/>
</dbReference>
<dbReference type="InterPro" id="IPR003817">
    <property type="entry name" value="PS_Dcarbxylase"/>
</dbReference>
<dbReference type="InterPro" id="IPR033175">
    <property type="entry name" value="PSD-A"/>
</dbReference>
<dbReference type="NCBIfam" id="TIGR00164">
    <property type="entry name" value="AS_decarb"/>
    <property type="match status" value="1"/>
</dbReference>
<dbReference type="NCBIfam" id="NF003678">
    <property type="entry name" value="PRK05305.1-2"/>
    <property type="match status" value="1"/>
</dbReference>
<dbReference type="NCBIfam" id="NF003680">
    <property type="entry name" value="PRK05305.1-5"/>
    <property type="match status" value="1"/>
</dbReference>
<dbReference type="NCBIfam" id="NF003685">
    <property type="entry name" value="PRK05305.2-5"/>
    <property type="match status" value="1"/>
</dbReference>
<dbReference type="PANTHER" id="PTHR35809">
    <property type="entry name" value="ARCHAETIDYLSERINE DECARBOXYLASE PROENZYME-RELATED"/>
    <property type="match status" value="1"/>
</dbReference>
<dbReference type="PANTHER" id="PTHR35809:SF1">
    <property type="entry name" value="ARCHAETIDYLSERINE DECARBOXYLASE PROENZYME-RELATED"/>
    <property type="match status" value="1"/>
</dbReference>
<dbReference type="Pfam" id="PF02666">
    <property type="entry name" value="PS_Dcarbxylase"/>
    <property type="match status" value="1"/>
</dbReference>
<comment type="function">
    <text evidence="1">Catalyzes the formation of phosphatidylethanolamine (PtdEtn) from phosphatidylserine (PtdSer).</text>
</comment>
<comment type="catalytic activity">
    <reaction evidence="1">
        <text>a 1,2-diacyl-sn-glycero-3-phospho-L-serine + H(+) = a 1,2-diacyl-sn-glycero-3-phosphoethanolamine + CO2</text>
        <dbReference type="Rhea" id="RHEA:20828"/>
        <dbReference type="ChEBI" id="CHEBI:15378"/>
        <dbReference type="ChEBI" id="CHEBI:16526"/>
        <dbReference type="ChEBI" id="CHEBI:57262"/>
        <dbReference type="ChEBI" id="CHEBI:64612"/>
        <dbReference type="EC" id="4.1.1.65"/>
    </reaction>
</comment>
<comment type="cofactor">
    <cofactor evidence="1">
        <name>pyruvate</name>
        <dbReference type="ChEBI" id="CHEBI:15361"/>
    </cofactor>
    <text evidence="1">Binds 1 pyruvoyl group covalently per subunit.</text>
</comment>
<comment type="pathway">
    <text evidence="1">Phospholipid metabolism; phosphatidylethanolamine biosynthesis; phosphatidylethanolamine from CDP-diacylglycerol: step 2/2.</text>
</comment>
<comment type="subunit">
    <text evidence="1">Heterodimer of a large membrane-associated beta subunit and a small pyruvoyl-containing alpha subunit.</text>
</comment>
<comment type="subcellular location">
    <subcellularLocation>
        <location evidence="1">Cell membrane</location>
        <topology evidence="1">Peripheral membrane protein</topology>
    </subcellularLocation>
</comment>
<comment type="PTM">
    <text evidence="1">Is synthesized initially as an inactive proenzyme. Formation of the active enzyme involves a self-maturation process in which the active site pyruvoyl group is generated from an internal serine residue via an autocatalytic post-translational modification. Two non-identical subunits are generated from the proenzyme in this reaction, and the pyruvate is formed at the N-terminus of the alpha chain, which is derived from the carboxyl end of the proenzyme. The post-translation cleavage follows an unusual pathway, termed non-hydrolytic serinolysis, in which the side chain hydroxyl group of the serine supplies its oxygen atom to form the C-terminus of the beta chain, while the remainder of the serine residue undergoes an oxidative deamination to produce ammonia and the pyruvoyl prosthetic group on the alpha chain.</text>
</comment>
<comment type="similarity">
    <text evidence="1">Belongs to the phosphatidylserine decarboxylase family. PSD-A subfamily.</text>
</comment>
<evidence type="ECO:0000255" key="1">
    <source>
        <dbReference type="HAMAP-Rule" id="MF_00664"/>
    </source>
</evidence>
<gene>
    <name evidence="1" type="primary">psd</name>
    <name type="ordered locus">BPSL1199</name>
</gene>
<accession>Q63VP5</accession>
<protein>
    <recommendedName>
        <fullName evidence="1">Phosphatidylserine decarboxylase proenzyme</fullName>
        <ecNumber evidence="1">4.1.1.65</ecNumber>
    </recommendedName>
    <component>
        <recommendedName>
            <fullName evidence="1">Phosphatidylserine decarboxylase alpha chain</fullName>
        </recommendedName>
    </component>
    <component>
        <recommendedName>
            <fullName evidence="1">Phosphatidylserine decarboxylase beta chain</fullName>
        </recommendedName>
    </component>
</protein>